<keyword id="KW-0687">Ribonucleoprotein</keyword>
<keyword id="KW-0689">Ribosomal protein</keyword>
<keyword id="KW-0694">RNA-binding</keyword>
<keyword id="KW-0699">rRNA-binding</keyword>
<reference key="1">
    <citation type="submission" date="1997-05" db="EMBL/GenBank/DDBJ databases">
        <authorList>
            <person name="Ropp P.A."/>
            <person name="Nicholas R.A."/>
        </authorList>
    </citation>
    <scope>NUCLEOTIDE SEQUENCE [GENOMIC DNA]</scope>
    <source>
        <strain>FA19</strain>
    </source>
</reference>
<sequence length="76" mass="8993">MARQSFKRRKFCRFTAEKIQEVDYKQVDLLKDFISENGKIIPARITGTKAFYQRQLAVAVKRARFLALLPYTDQHK</sequence>
<name>RS18_NEIGO</name>
<accession>P0A0X8</accession>
<accession>O07815</accession>
<proteinExistence type="inferred from homology"/>
<evidence type="ECO:0000255" key="1">
    <source>
        <dbReference type="HAMAP-Rule" id="MF_00270"/>
    </source>
</evidence>
<evidence type="ECO:0000305" key="2"/>
<organism>
    <name type="scientific">Neisseria gonorrhoeae</name>
    <dbReference type="NCBI Taxonomy" id="485"/>
    <lineage>
        <taxon>Bacteria</taxon>
        <taxon>Pseudomonadati</taxon>
        <taxon>Pseudomonadota</taxon>
        <taxon>Betaproteobacteria</taxon>
        <taxon>Neisseriales</taxon>
        <taxon>Neisseriaceae</taxon>
        <taxon>Neisseria</taxon>
    </lineage>
</organism>
<feature type="chain" id="PRO_0000111192" description="Small ribosomal subunit protein bS18">
    <location>
        <begin position="1"/>
        <end position="76"/>
    </location>
</feature>
<dbReference type="EMBL" id="AF003196">
    <property type="protein sequence ID" value="AAB61230.1"/>
    <property type="molecule type" value="Genomic_DNA"/>
</dbReference>
<dbReference type="RefSeq" id="WP_002213306.1">
    <property type="nucleotide sequence ID" value="NZ_WHPL01000002.1"/>
</dbReference>
<dbReference type="SMR" id="P0A0X8"/>
<dbReference type="GeneID" id="93385879"/>
<dbReference type="OMA" id="QKKYCRF"/>
<dbReference type="GO" id="GO:0022627">
    <property type="term" value="C:cytosolic small ribosomal subunit"/>
    <property type="evidence" value="ECO:0007669"/>
    <property type="project" value="TreeGrafter"/>
</dbReference>
<dbReference type="GO" id="GO:0070181">
    <property type="term" value="F:small ribosomal subunit rRNA binding"/>
    <property type="evidence" value="ECO:0007669"/>
    <property type="project" value="TreeGrafter"/>
</dbReference>
<dbReference type="GO" id="GO:0003735">
    <property type="term" value="F:structural constituent of ribosome"/>
    <property type="evidence" value="ECO:0007669"/>
    <property type="project" value="InterPro"/>
</dbReference>
<dbReference type="GO" id="GO:0006412">
    <property type="term" value="P:translation"/>
    <property type="evidence" value="ECO:0007669"/>
    <property type="project" value="UniProtKB-UniRule"/>
</dbReference>
<dbReference type="FunFam" id="4.10.640.10:FF:000001">
    <property type="entry name" value="30S ribosomal protein S18"/>
    <property type="match status" value="1"/>
</dbReference>
<dbReference type="Gene3D" id="4.10.640.10">
    <property type="entry name" value="Ribosomal protein S18"/>
    <property type="match status" value="1"/>
</dbReference>
<dbReference type="HAMAP" id="MF_00270">
    <property type="entry name" value="Ribosomal_bS18"/>
    <property type="match status" value="1"/>
</dbReference>
<dbReference type="InterPro" id="IPR001648">
    <property type="entry name" value="Ribosomal_bS18"/>
</dbReference>
<dbReference type="InterPro" id="IPR018275">
    <property type="entry name" value="Ribosomal_bS18_CS"/>
</dbReference>
<dbReference type="InterPro" id="IPR036870">
    <property type="entry name" value="Ribosomal_bS18_sf"/>
</dbReference>
<dbReference type="NCBIfam" id="TIGR00165">
    <property type="entry name" value="S18"/>
    <property type="match status" value="1"/>
</dbReference>
<dbReference type="PANTHER" id="PTHR13479">
    <property type="entry name" value="30S RIBOSOMAL PROTEIN S18"/>
    <property type="match status" value="1"/>
</dbReference>
<dbReference type="PANTHER" id="PTHR13479:SF40">
    <property type="entry name" value="SMALL RIBOSOMAL SUBUNIT PROTEIN BS18M"/>
    <property type="match status" value="1"/>
</dbReference>
<dbReference type="Pfam" id="PF01084">
    <property type="entry name" value="Ribosomal_S18"/>
    <property type="match status" value="1"/>
</dbReference>
<dbReference type="PRINTS" id="PR00974">
    <property type="entry name" value="RIBOSOMALS18"/>
</dbReference>
<dbReference type="SUPFAM" id="SSF46911">
    <property type="entry name" value="Ribosomal protein S18"/>
    <property type="match status" value="1"/>
</dbReference>
<dbReference type="PROSITE" id="PS00057">
    <property type="entry name" value="RIBOSOMAL_S18"/>
    <property type="match status" value="1"/>
</dbReference>
<comment type="function">
    <text evidence="1">Binds as a heterodimer with protein bS6 to the central domain of the 16S rRNA, where it helps stabilize the platform of the 30S subunit.</text>
</comment>
<comment type="subunit">
    <text evidence="1">Part of the 30S ribosomal subunit. Forms a tight heterodimer with protein bS6.</text>
</comment>
<comment type="similarity">
    <text evidence="1">Belongs to the bacterial ribosomal protein bS18 family.</text>
</comment>
<protein>
    <recommendedName>
        <fullName evidence="1">Small ribosomal subunit protein bS18</fullName>
    </recommendedName>
    <alternativeName>
        <fullName evidence="2">30S ribosomal protein S18</fullName>
    </alternativeName>
</protein>
<gene>
    <name evidence="1" type="primary">rpsR</name>
</gene>